<organism>
    <name type="scientific">Bos taurus</name>
    <name type="common">Bovine</name>
    <dbReference type="NCBI Taxonomy" id="9913"/>
    <lineage>
        <taxon>Eukaryota</taxon>
        <taxon>Metazoa</taxon>
        <taxon>Chordata</taxon>
        <taxon>Craniata</taxon>
        <taxon>Vertebrata</taxon>
        <taxon>Euteleostomi</taxon>
        <taxon>Mammalia</taxon>
        <taxon>Eutheria</taxon>
        <taxon>Laurasiatheria</taxon>
        <taxon>Artiodactyla</taxon>
        <taxon>Ruminantia</taxon>
        <taxon>Pecora</taxon>
        <taxon>Bovidae</taxon>
        <taxon>Bovinae</taxon>
        <taxon>Bos</taxon>
    </lineage>
</organism>
<feature type="initiator methionine" description="Removed" evidence="3">
    <location>
        <position position="1"/>
    </location>
</feature>
<feature type="chain" id="PRO_0000260255" description="Cofilin-2">
    <location>
        <begin position="2"/>
        <end position="166"/>
    </location>
</feature>
<feature type="domain" description="ADF-H" evidence="5">
    <location>
        <begin position="4"/>
        <end position="153"/>
    </location>
</feature>
<feature type="short sequence motif" description="Nuclear localization signal" evidence="4">
    <location>
        <begin position="30"/>
        <end position="34"/>
    </location>
</feature>
<feature type="modified residue" description="N-acetylalanine" evidence="3">
    <location>
        <position position="2"/>
    </location>
</feature>
<feature type="modified residue" description="Phosphoserine" evidence="3">
    <location>
        <position position="3"/>
    </location>
</feature>
<feature type="modified residue" description="Phosphothreonine" evidence="2">
    <location>
        <position position="6"/>
    </location>
</feature>
<gene>
    <name type="primary">CFL2</name>
</gene>
<protein>
    <recommendedName>
        <fullName>Cofilin-2</fullName>
    </recommendedName>
    <alternativeName>
        <fullName>Cofilin, muscle isoform</fullName>
    </alternativeName>
</protein>
<dbReference type="EMBL" id="BC118390">
    <property type="protein sequence ID" value="AAI18391.1"/>
    <property type="molecule type" value="mRNA"/>
</dbReference>
<dbReference type="RefSeq" id="NP_001069622.1">
    <property type="nucleotide sequence ID" value="NM_001076154.2"/>
</dbReference>
<dbReference type="BMRB" id="Q148F1"/>
<dbReference type="SMR" id="Q148F1"/>
<dbReference type="FunCoup" id="Q148F1">
    <property type="interactions" value="1913"/>
</dbReference>
<dbReference type="STRING" id="9913.ENSBTAP00000020036"/>
<dbReference type="PaxDb" id="9913-ENSBTAP00000020036"/>
<dbReference type="PeptideAtlas" id="Q148F1"/>
<dbReference type="Ensembl" id="ENSBTAT00000020036.4">
    <property type="protein sequence ID" value="ENSBTAP00000020036.3"/>
    <property type="gene ID" value="ENSBTAG00000015053.5"/>
</dbReference>
<dbReference type="GeneID" id="539332"/>
<dbReference type="KEGG" id="bta:539332"/>
<dbReference type="CTD" id="1073"/>
<dbReference type="VEuPathDB" id="HostDB:ENSBTAG00000015053"/>
<dbReference type="VGNC" id="VGNC:27254">
    <property type="gene designation" value="CFL2"/>
</dbReference>
<dbReference type="eggNOG" id="KOG1735">
    <property type="taxonomic scope" value="Eukaryota"/>
</dbReference>
<dbReference type="GeneTree" id="ENSGT00950000183000"/>
<dbReference type="HOGENOM" id="CLU_094004_0_0_1"/>
<dbReference type="InParanoid" id="Q148F1"/>
<dbReference type="OMA" id="QCRFAVY"/>
<dbReference type="OrthoDB" id="10249245at2759"/>
<dbReference type="TreeFam" id="TF328601"/>
<dbReference type="Proteomes" id="UP000009136">
    <property type="component" value="Chromosome 21"/>
</dbReference>
<dbReference type="Bgee" id="ENSBTAG00000015053">
    <property type="expression patterns" value="Expressed in gluteus medius and 105 other cell types or tissues"/>
</dbReference>
<dbReference type="GO" id="GO:0015629">
    <property type="term" value="C:actin cytoskeleton"/>
    <property type="evidence" value="ECO:0000318"/>
    <property type="project" value="GO_Central"/>
</dbReference>
<dbReference type="GO" id="GO:0005737">
    <property type="term" value="C:cytoplasm"/>
    <property type="evidence" value="ECO:0000318"/>
    <property type="project" value="GO_Central"/>
</dbReference>
<dbReference type="GO" id="GO:0016363">
    <property type="term" value="C:nuclear matrix"/>
    <property type="evidence" value="ECO:0007669"/>
    <property type="project" value="UniProtKB-SubCell"/>
</dbReference>
<dbReference type="GO" id="GO:0030018">
    <property type="term" value="C:Z disc"/>
    <property type="evidence" value="ECO:0007669"/>
    <property type="project" value="Ensembl"/>
</dbReference>
<dbReference type="GO" id="GO:0051015">
    <property type="term" value="F:actin filament binding"/>
    <property type="evidence" value="ECO:0000250"/>
    <property type="project" value="UniProtKB"/>
</dbReference>
<dbReference type="GO" id="GO:0030042">
    <property type="term" value="P:actin filament depolymerization"/>
    <property type="evidence" value="ECO:0000250"/>
    <property type="project" value="UniProtKB"/>
</dbReference>
<dbReference type="GO" id="GO:0030043">
    <property type="term" value="P:actin filament fragmentation"/>
    <property type="evidence" value="ECO:0000318"/>
    <property type="project" value="GO_Central"/>
</dbReference>
<dbReference type="GO" id="GO:0051014">
    <property type="term" value="P:actin filament severing"/>
    <property type="evidence" value="ECO:0000318"/>
    <property type="project" value="GO_Central"/>
</dbReference>
<dbReference type="GO" id="GO:0046716">
    <property type="term" value="P:muscle cell cellular homeostasis"/>
    <property type="evidence" value="ECO:0007669"/>
    <property type="project" value="Ensembl"/>
</dbReference>
<dbReference type="GO" id="GO:0030836">
    <property type="term" value="P:positive regulation of actin filament depolymerization"/>
    <property type="evidence" value="ECO:0007669"/>
    <property type="project" value="Ensembl"/>
</dbReference>
<dbReference type="GO" id="GO:0045214">
    <property type="term" value="P:sarcomere organization"/>
    <property type="evidence" value="ECO:0007669"/>
    <property type="project" value="Ensembl"/>
</dbReference>
<dbReference type="GO" id="GO:0007519">
    <property type="term" value="P:skeletal muscle tissue development"/>
    <property type="evidence" value="ECO:0007669"/>
    <property type="project" value="Ensembl"/>
</dbReference>
<dbReference type="CDD" id="cd11286">
    <property type="entry name" value="ADF_cofilin_like"/>
    <property type="match status" value="1"/>
</dbReference>
<dbReference type="FunFam" id="3.40.20.10:FF:000010">
    <property type="entry name" value="Putative destrin"/>
    <property type="match status" value="1"/>
</dbReference>
<dbReference type="Gene3D" id="3.40.20.10">
    <property type="entry name" value="Severin"/>
    <property type="match status" value="1"/>
</dbReference>
<dbReference type="InterPro" id="IPR002108">
    <property type="entry name" value="ADF-H"/>
</dbReference>
<dbReference type="InterPro" id="IPR029006">
    <property type="entry name" value="ADF-H/Gelsolin-like_dom_sf"/>
</dbReference>
<dbReference type="InterPro" id="IPR017904">
    <property type="entry name" value="ADF/Cofilin"/>
</dbReference>
<dbReference type="PANTHER" id="PTHR11913">
    <property type="entry name" value="COFILIN-RELATED"/>
    <property type="match status" value="1"/>
</dbReference>
<dbReference type="Pfam" id="PF00241">
    <property type="entry name" value="Cofilin_ADF"/>
    <property type="match status" value="1"/>
</dbReference>
<dbReference type="PRINTS" id="PR00006">
    <property type="entry name" value="COFILIN"/>
</dbReference>
<dbReference type="SMART" id="SM00102">
    <property type="entry name" value="ADF"/>
    <property type="match status" value="1"/>
</dbReference>
<dbReference type="SUPFAM" id="SSF55753">
    <property type="entry name" value="Actin depolymerizing proteins"/>
    <property type="match status" value="1"/>
</dbReference>
<dbReference type="PROSITE" id="PS51263">
    <property type="entry name" value="ADF_H"/>
    <property type="match status" value="1"/>
</dbReference>
<keyword id="KW-0007">Acetylation</keyword>
<keyword id="KW-0009">Actin-binding</keyword>
<keyword id="KW-0963">Cytoplasm</keyword>
<keyword id="KW-0206">Cytoskeleton</keyword>
<keyword id="KW-0539">Nucleus</keyword>
<keyword id="KW-0597">Phosphoprotein</keyword>
<keyword id="KW-1185">Reference proteome</keyword>
<proteinExistence type="evidence at transcript level"/>
<comment type="function">
    <text evidence="1">Controls reversibly actin polymerization and depolymerization in a pH-sensitive manner. It has the ability to bind G- and F-actin in a 1:1 ratio of cofilin to actin. It is the major component of intranuclear and cytoplasmic actin rods (By similarity).</text>
</comment>
<comment type="subcellular location">
    <subcellularLocation>
        <location evidence="1">Nucleus matrix</location>
    </subcellularLocation>
    <subcellularLocation>
        <location evidence="1">Cytoplasm</location>
        <location evidence="1">Cytoskeleton</location>
    </subcellularLocation>
</comment>
<comment type="PTM">
    <text>The phosphorylation of Ser-24 may prevent recognition of the nuclear localization signal.</text>
</comment>
<comment type="similarity">
    <text evidence="6">Belongs to the actin-binding proteins ADF family.</text>
</comment>
<sequence length="166" mass="18737">MASGVTVNDEVIKVFNDMKVRKSSTQEEIKKRKKAVLFCLSDDKRQIIVEEAKQILVGDIGDTVEDPYTSFVKLLPLNDCRYALYDATYETKESKKEDLVFIFWAPESAPLKSKMIYASSKDAIKKKFTGIKHEWQVNGLDDIKDRSTLGEKLGGNVVVSLEGKPL</sequence>
<reference key="1">
    <citation type="submission" date="2006-06" db="EMBL/GenBank/DDBJ databases">
        <authorList>
            <consortium name="NIH - Mammalian Gene Collection (MGC) project"/>
        </authorList>
    </citation>
    <scope>NUCLEOTIDE SEQUENCE [LARGE SCALE MRNA]</scope>
    <source>
        <strain>Hereford</strain>
        <tissue>Fetal cerebellum</tissue>
    </source>
</reference>
<accession>Q148F1</accession>
<name>COF2_BOVIN</name>
<evidence type="ECO:0000250" key="1"/>
<evidence type="ECO:0000250" key="2">
    <source>
        <dbReference type="UniProtKB" id="P45591"/>
    </source>
</evidence>
<evidence type="ECO:0000250" key="3">
    <source>
        <dbReference type="UniProtKB" id="Q9Y281"/>
    </source>
</evidence>
<evidence type="ECO:0000255" key="4"/>
<evidence type="ECO:0000255" key="5">
    <source>
        <dbReference type="PROSITE-ProRule" id="PRU00599"/>
    </source>
</evidence>
<evidence type="ECO:0000305" key="6"/>